<evidence type="ECO:0000250" key="1">
    <source>
        <dbReference type="UniProtKB" id="P00362"/>
    </source>
</evidence>
<evidence type="ECO:0000250" key="2">
    <source>
        <dbReference type="UniProtKB" id="P10618"/>
    </source>
</evidence>
<evidence type="ECO:0000250" key="3">
    <source>
        <dbReference type="UniProtKB" id="P80506"/>
    </source>
</evidence>
<evidence type="ECO:0000250" key="4">
    <source>
        <dbReference type="UniProtKB" id="Q6GIL8"/>
    </source>
</evidence>
<evidence type="ECO:0000269" key="5">
    <source>
    </source>
</evidence>
<evidence type="ECO:0000269" key="6">
    <source ref="3"/>
</evidence>
<evidence type="ECO:0000303" key="7">
    <source>
    </source>
</evidence>
<evidence type="ECO:0000305" key="8"/>
<evidence type="ECO:0000305" key="9">
    <source>
    </source>
</evidence>
<reference key="1">
    <citation type="journal article" date="2001" name="DNA Res.">
        <title>Complete genomic sequence of the filamentous nitrogen-fixing cyanobacterium Anabaena sp. strain PCC 7120.</title>
        <authorList>
            <person name="Kaneko T."/>
            <person name="Nakamura Y."/>
            <person name="Wolk C.P."/>
            <person name="Kuritz T."/>
            <person name="Sasamoto S."/>
            <person name="Watanabe A."/>
            <person name="Iriguchi M."/>
            <person name="Ishikawa A."/>
            <person name="Kawashima K."/>
            <person name="Kimura T."/>
            <person name="Kishida Y."/>
            <person name="Kohara M."/>
            <person name="Matsumoto M."/>
            <person name="Matsuno A."/>
            <person name="Muraki A."/>
            <person name="Nakazaki N."/>
            <person name="Shimpo S."/>
            <person name="Sugimoto M."/>
            <person name="Takazawa M."/>
            <person name="Yamada M."/>
            <person name="Yasuda M."/>
            <person name="Tabata S."/>
        </authorList>
    </citation>
    <scope>NUCLEOTIDE SEQUENCE [LARGE SCALE GENOMIC DNA]</scope>
    <source>
        <strain>PCC 7120 / SAG 25.82 / UTEX 2576</strain>
    </source>
</reference>
<reference key="2">
    <citation type="journal article" date="2001" name="Biochem. Biophys. Res. Commun.">
        <title>Simultaneous occurrence of two different glyceraldehyde-3-phosphate dehydrogenases in heterocystous N(2)-fixing cyanobacteria.</title>
        <authorList>
            <person name="Valverde F."/>
            <person name="Peleato M.L."/>
            <person name="Fillat M.F."/>
            <person name="Gomez-Moreno C."/>
            <person name="Losada M."/>
            <person name="Serrano A."/>
        </authorList>
    </citation>
    <scope>NUCLEOTIDE SEQUENCE [GENOMIC DNA] OF 7-320</scope>
    <scope>FUNCTION</scope>
    <scope>DEVELOPMENTAL STAGE</scope>
    <source>
        <strain>PCC 7120 / SAG 25.82 / UTEX 2576</strain>
    </source>
</reference>
<reference key="3">
    <citation type="submission" date="2008-12" db="UniProtKB">
        <authorList>
            <person name="Singh H."/>
            <person name="Rajaram H."/>
            <person name="Apte S.K."/>
        </authorList>
    </citation>
    <scope>PROTEIN SEQUENCE OF 265-272</scope>
    <scope>MASS SPECTROMETRY</scope>
</reference>
<protein>
    <recommendedName>
        <fullName evidence="7">Glyceraldehyde-3-phosphate dehydrogenase 2</fullName>
        <shortName evidence="7">GAPDH 2</shortName>
        <ecNumber evidence="2">1.2.1.59</ecNumber>
    </recommendedName>
    <alternativeName>
        <fullName evidence="7">NAD(P)-dependent glyceraldehyde-3-phosphate dehydrogenase</fullName>
    </alternativeName>
</protein>
<comment type="function">
    <text evidence="5">Gap2 has a major role in carbon fixation as a component of the Calvin cycle. Catalyzes the oxidative phosphorylation of glyceraldehyde 3-phosphate (G3P) to 1,3-bisphosphoglycerate (BPG) using the cofactor NADP. The first reaction step involves the formation of a hemiacetal intermediate between G3P and a cysteine residue, and this hemiacetal intermediate is then oxidized to a thioester, with concomitant reduction of NADP to NADPH. The reduced NADPH is then exchanged with the second NAD, and the thioester is attacked by a nucleophilic inorganic phosphate to produce BPG.</text>
</comment>
<comment type="catalytic activity">
    <reaction evidence="2">
        <text>D-glyceraldehyde 3-phosphate + phosphate + NADP(+) = (2R)-3-phospho-glyceroyl phosphate + NADPH + H(+)</text>
        <dbReference type="Rhea" id="RHEA:10296"/>
        <dbReference type="ChEBI" id="CHEBI:15378"/>
        <dbReference type="ChEBI" id="CHEBI:43474"/>
        <dbReference type="ChEBI" id="CHEBI:57604"/>
        <dbReference type="ChEBI" id="CHEBI:57783"/>
        <dbReference type="ChEBI" id="CHEBI:58349"/>
        <dbReference type="ChEBI" id="CHEBI:59776"/>
        <dbReference type="EC" id="1.2.1.59"/>
    </reaction>
</comment>
<comment type="catalytic activity">
    <reaction evidence="2">
        <text>D-glyceraldehyde 3-phosphate + phosphate + NAD(+) = (2R)-3-phospho-glyceroyl phosphate + NADH + H(+)</text>
        <dbReference type="Rhea" id="RHEA:10300"/>
        <dbReference type="ChEBI" id="CHEBI:15378"/>
        <dbReference type="ChEBI" id="CHEBI:43474"/>
        <dbReference type="ChEBI" id="CHEBI:57540"/>
        <dbReference type="ChEBI" id="CHEBI:57604"/>
        <dbReference type="ChEBI" id="CHEBI:57945"/>
        <dbReference type="ChEBI" id="CHEBI:59776"/>
        <dbReference type="EC" id="1.2.1.59"/>
    </reaction>
</comment>
<comment type="pathway">
    <text evidence="9">Carbohydrate biosynthesis; Calvin cycle.</text>
</comment>
<comment type="subunit">
    <text evidence="3">Homotetramer.</text>
</comment>
<comment type="subcellular location">
    <subcellularLocation>
        <location evidence="8">Cytoplasm</location>
    </subcellularLocation>
</comment>
<comment type="developmental stage">
    <text evidence="5">Expressed in vegetative cells and heterocysts, however the expression is higher in vegetative cells than in heterocysts.</text>
</comment>
<comment type="mass spectrometry"/>
<comment type="similarity">
    <text evidence="8">Belongs to the glyceraldehyde-3-phosphate dehydrogenase family.</text>
</comment>
<gene>
    <name type="primary">gap2</name>
    <name type="ordered locus">all5062</name>
</gene>
<name>G3P2_NOSS1</name>
<keyword id="KW-0113">Calvin cycle</keyword>
<keyword id="KW-0963">Cytoplasm</keyword>
<keyword id="KW-0903">Direct protein sequencing</keyword>
<keyword id="KW-0521">NADP</keyword>
<keyword id="KW-0547">Nucleotide-binding</keyword>
<keyword id="KW-0560">Oxidoreductase</keyword>
<keyword id="KW-1185">Reference proteome</keyword>
<sequence>MIRVAINGFGRIGRNFARCWLGRENTNIELVAVNDTSDPRTNAHLLKYDSMLGKLKNVDITADDNSITVNGKTIKCVSDRNPENLPWKEWEIDLIIEATGVFVSKEGATKHINAGAKKVLITAPGKNEDGTFVMGVNHHDYDHNLHNIISNASCTTNCLAPIAKVLNDKFGIIKGSMTTTHSYTGDQRLLDASHRDLRRARAAAINIVPTSTGAAKAVALVIPELKGKLNGVALRVPTPNVSMVDFVVQVEKRTITEEVNQALKDASEGPLKGILDYSELQLVSSDYQGTDASSIVDANLTLVMGNDLVKVMAWYDNEWGYSQRVLDLAELVAEKWV</sequence>
<organism>
    <name type="scientific">Nostoc sp. (strain PCC 7120 / SAG 25.82 / UTEX 2576)</name>
    <dbReference type="NCBI Taxonomy" id="103690"/>
    <lineage>
        <taxon>Bacteria</taxon>
        <taxon>Bacillati</taxon>
        <taxon>Cyanobacteriota</taxon>
        <taxon>Cyanophyceae</taxon>
        <taxon>Nostocales</taxon>
        <taxon>Nostocaceae</taxon>
        <taxon>Nostoc</taxon>
    </lineage>
</organism>
<feature type="chain" id="PRO_0000145625" description="Glyceraldehyde-3-phosphate dehydrogenase 2">
    <location>
        <begin position="1"/>
        <end position="337"/>
    </location>
</feature>
<feature type="active site" description="Nucleophile" evidence="1">
    <location>
        <position position="154"/>
    </location>
</feature>
<feature type="binding site" evidence="1">
    <location>
        <begin position="11"/>
        <end position="12"/>
    </location>
    <ligand>
        <name>NADP(+)</name>
        <dbReference type="ChEBI" id="CHEBI:58349"/>
    </ligand>
</feature>
<feature type="binding site" evidence="1">
    <location>
        <position position="35"/>
    </location>
    <ligand>
        <name>NADP(+)</name>
        <dbReference type="ChEBI" id="CHEBI:58349"/>
    </ligand>
</feature>
<feature type="binding site" evidence="1">
    <location>
        <position position="80"/>
    </location>
    <ligand>
        <name>NADP(+)</name>
        <dbReference type="ChEBI" id="CHEBI:58349"/>
    </ligand>
</feature>
<feature type="binding site" evidence="1">
    <location>
        <position position="122"/>
    </location>
    <ligand>
        <name>NADP(+)</name>
        <dbReference type="ChEBI" id="CHEBI:58349"/>
    </ligand>
</feature>
<feature type="binding site" evidence="1">
    <location>
        <begin position="153"/>
        <end position="155"/>
    </location>
    <ligand>
        <name>D-glyceraldehyde 3-phosphate</name>
        <dbReference type="ChEBI" id="CHEBI:59776"/>
    </ligand>
</feature>
<feature type="binding site" evidence="1">
    <location>
        <position position="184"/>
    </location>
    <ligand>
        <name>D-glyceraldehyde 3-phosphate</name>
        <dbReference type="ChEBI" id="CHEBI:59776"/>
    </ligand>
</feature>
<feature type="binding site" evidence="1">
    <location>
        <position position="199"/>
    </location>
    <ligand>
        <name>D-glyceraldehyde 3-phosphate</name>
        <dbReference type="ChEBI" id="CHEBI:59776"/>
    </ligand>
</feature>
<feature type="binding site" evidence="1">
    <location>
        <begin position="212"/>
        <end position="213"/>
    </location>
    <ligand>
        <name>D-glyceraldehyde 3-phosphate</name>
        <dbReference type="ChEBI" id="CHEBI:59776"/>
    </ligand>
</feature>
<feature type="binding site" evidence="1">
    <location>
        <position position="235"/>
    </location>
    <ligand>
        <name>D-glyceraldehyde 3-phosphate</name>
        <dbReference type="ChEBI" id="CHEBI:59776"/>
    </ligand>
</feature>
<feature type="binding site" evidence="1">
    <location>
        <position position="317"/>
    </location>
    <ligand>
        <name>NADP(+)</name>
        <dbReference type="ChEBI" id="CHEBI:58349"/>
    </ligand>
</feature>
<feature type="site" description="Activates thiol group during catalysis" evidence="4">
    <location>
        <position position="181"/>
    </location>
</feature>
<feature type="sequence conflict" description="In Ref. 2; CAC41001." evidence="8" ref="2">
    <original>K</original>
    <variation>N</variation>
    <location>
        <position position="252"/>
    </location>
</feature>
<feature type="sequence conflict" description="In Ref. 2; CAC41001." evidence="8" ref="2">
    <original>W</original>
    <variation>C</variation>
    <location>
        <position position="319"/>
    </location>
</feature>
<proteinExistence type="evidence at protein level"/>
<dbReference type="EC" id="1.2.1.59" evidence="2"/>
<dbReference type="EMBL" id="BA000019">
    <property type="protein sequence ID" value="BAB76761.1"/>
    <property type="molecule type" value="Genomic_DNA"/>
</dbReference>
<dbReference type="EMBL" id="AJ251774">
    <property type="protein sequence ID" value="CAC41001.1"/>
    <property type="molecule type" value="Genomic_DNA"/>
</dbReference>
<dbReference type="PIR" id="AF2438">
    <property type="entry name" value="AF2438"/>
</dbReference>
<dbReference type="RefSeq" id="WP_010999188.1">
    <property type="nucleotide sequence ID" value="NZ_RSCN01000014.1"/>
</dbReference>
<dbReference type="SMR" id="P58554"/>
<dbReference type="STRING" id="103690.gene:10497120"/>
<dbReference type="KEGG" id="ana:all5062"/>
<dbReference type="eggNOG" id="COG0057">
    <property type="taxonomic scope" value="Bacteria"/>
</dbReference>
<dbReference type="OrthoDB" id="9803304at2"/>
<dbReference type="UniPathway" id="UPA00116"/>
<dbReference type="Proteomes" id="UP000002483">
    <property type="component" value="Chromosome"/>
</dbReference>
<dbReference type="GO" id="GO:0005737">
    <property type="term" value="C:cytoplasm"/>
    <property type="evidence" value="ECO:0007669"/>
    <property type="project" value="UniProtKB-SubCell"/>
</dbReference>
<dbReference type="GO" id="GO:0004365">
    <property type="term" value="F:glyceraldehyde-3-phosphate dehydrogenase (NAD+) (phosphorylating) activity"/>
    <property type="evidence" value="ECO:0000250"/>
    <property type="project" value="UniProtKB"/>
</dbReference>
<dbReference type="GO" id="GO:0047100">
    <property type="term" value="F:glyceraldehyde-3-phosphate dehydrogenase (NADP+) (phosphorylating) activity"/>
    <property type="evidence" value="ECO:0007669"/>
    <property type="project" value="RHEA"/>
</dbReference>
<dbReference type="GO" id="GO:0051287">
    <property type="term" value="F:NAD binding"/>
    <property type="evidence" value="ECO:0000250"/>
    <property type="project" value="UniProtKB"/>
</dbReference>
<dbReference type="GO" id="GO:0050661">
    <property type="term" value="F:NADP binding"/>
    <property type="evidence" value="ECO:0007669"/>
    <property type="project" value="InterPro"/>
</dbReference>
<dbReference type="GO" id="GO:0006006">
    <property type="term" value="P:glucose metabolic process"/>
    <property type="evidence" value="ECO:0007669"/>
    <property type="project" value="InterPro"/>
</dbReference>
<dbReference type="GO" id="GO:0019253">
    <property type="term" value="P:reductive pentose-phosphate cycle"/>
    <property type="evidence" value="ECO:0007669"/>
    <property type="project" value="UniProtKB-UniPathway"/>
</dbReference>
<dbReference type="CDD" id="cd18126">
    <property type="entry name" value="GAPDH_I_C"/>
    <property type="match status" value="1"/>
</dbReference>
<dbReference type="CDD" id="cd05214">
    <property type="entry name" value="GAPDH_I_N"/>
    <property type="match status" value="1"/>
</dbReference>
<dbReference type="FunFam" id="3.30.360.10:FF:000002">
    <property type="entry name" value="Glyceraldehyde-3-phosphate dehydrogenase"/>
    <property type="match status" value="1"/>
</dbReference>
<dbReference type="FunFam" id="3.40.50.720:FF:000001">
    <property type="entry name" value="Glyceraldehyde-3-phosphate dehydrogenase"/>
    <property type="match status" value="1"/>
</dbReference>
<dbReference type="Gene3D" id="3.30.360.10">
    <property type="entry name" value="Dihydrodipicolinate Reductase, domain 2"/>
    <property type="match status" value="1"/>
</dbReference>
<dbReference type="Gene3D" id="3.40.50.720">
    <property type="entry name" value="NAD(P)-binding Rossmann-like Domain"/>
    <property type="match status" value="1"/>
</dbReference>
<dbReference type="InterPro" id="IPR020831">
    <property type="entry name" value="GlycerAld/Erythrose_P_DH"/>
</dbReference>
<dbReference type="InterPro" id="IPR020830">
    <property type="entry name" value="GlycerAld_3-P_DH_AS"/>
</dbReference>
<dbReference type="InterPro" id="IPR020829">
    <property type="entry name" value="GlycerAld_3-P_DH_cat"/>
</dbReference>
<dbReference type="InterPro" id="IPR020828">
    <property type="entry name" value="GlycerAld_3-P_DH_NAD(P)-bd"/>
</dbReference>
<dbReference type="InterPro" id="IPR006424">
    <property type="entry name" value="Glyceraldehyde-3-P_DH_1"/>
</dbReference>
<dbReference type="InterPro" id="IPR036291">
    <property type="entry name" value="NAD(P)-bd_dom_sf"/>
</dbReference>
<dbReference type="NCBIfam" id="TIGR01534">
    <property type="entry name" value="GAPDH-I"/>
    <property type="match status" value="1"/>
</dbReference>
<dbReference type="NCBIfam" id="NF005641">
    <property type="entry name" value="PRK07403.1"/>
    <property type="match status" value="1"/>
</dbReference>
<dbReference type="PANTHER" id="PTHR43148">
    <property type="entry name" value="GLYCERALDEHYDE-3-PHOSPHATE DEHYDROGENASE 2"/>
    <property type="match status" value="1"/>
</dbReference>
<dbReference type="Pfam" id="PF02800">
    <property type="entry name" value="Gp_dh_C"/>
    <property type="match status" value="1"/>
</dbReference>
<dbReference type="Pfam" id="PF00044">
    <property type="entry name" value="Gp_dh_N"/>
    <property type="match status" value="1"/>
</dbReference>
<dbReference type="PIRSF" id="PIRSF000149">
    <property type="entry name" value="GAP_DH"/>
    <property type="match status" value="1"/>
</dbReference>
<dbReference type="PRINTS" id="PR00078">
    <property type="entry name" value="G3PDHDRGNASE"/>
</dbReference>
<dbReference type="SMART" id="SM00846">
    <property type="entry name" value="Gp_dh_N"/>
    <property type="match status" value="1"/>
</dbReference>
<dbReference type="SUPFAM" id="SSF55347">
    <property type="entry name" value="Glyceraldehyde-3-phosphate dehydrogenase-like, C-terminal domain"/>
    <property type="match status" value="1"/>
</dbReference>
<dbReference type="SUPFAM" id="SSF51735">
    <property type="entry name" value="NAD(P)-binding Rossmann-fold domains"/>
    <property type="match status" value="1"/>
</dbReference>
<dbReference type="PROSITE" id="PS00071">
    <property type="entry name" value="GAPDH"/>
    <property type="match status" value="1"/>
</dbReference>
<accession>P58554</accession>
<accession>Q93M82</accession>